<comment type="function">
    <text evidence="1">Catalyzes the transfer of the diacylglyceryl group from phosphatidylglycerol to the sulfhydryl group of the N-terminal cysteine of a prolipoprotein, the first step in the formation of mature lipoproteins.</text>
</comment>
<comment type="catalytic activity">
    <reaction evidence="1">
        <text>L-cysteinyl-[prolipoprotein] + a 1,2-diacyl-sn-glycero-3-phospho-(1'-sn-glycerol) = an S-1,2-diacyl-sn-glyceryl-L-cysteinyl-[prolipoprotein] + sn-glycerol 1-phosphate + H(+)</text>
        <dbReference type="Rhea" id="RHEA:56712"/>
        <dbReference type="Rhea" id="RHEA-COMP:14679"/>
        <dbReference type="Rhea" id="RHEA-COMP:14680"/>
        <dbReference type="ChEBI" id="CHEBI:15378"/>
        <dbReference type="ChEBI" id="CHEBI:29950"/>
        <dbReference type="ChEBI" id="CHEBI:57685"/>
        <dbReference type="ChEBI" id="CHEBI:64716"/>
        <dbReference type="ChEBI" id="CHEBI:140658"/>
        <dbReference type="EC" id="2.5.1.145"/>
    </reaction>
</comment>
<comment type="pathway">
    <text evidence="1">Protein modification; lipoprotein biosynthesis (diacylglyceryl transfer).</text>
</comment>
<comment type="subcellular location">
    <subcellularLocation>
        <location evidence="1">Cell inner membrane</location>
        <topology evidence="1">Multi-pass membrane protein</topology>
    </subcellularLocation>
</comment>
<comment type="similarity">
    <text evidence="1">Belongs to the Lgt family.</text>
</comment>
<name>LGT_HELAH</name>
<sequence>MNAWNTIYERFNPIAFSLGSIEVHWYGLAYACAIVIAFYMALRMIQKDPKRFPVARKDFESYFLWAELGIVLGARIGYILIYEPNSSYYLTHFWQIFNPFDSHGNFIGIRGMSYHGGLVGFLIASYLYNRKDLKKLLIYLDLIAISLPLGYVFGRIGNFLNQELVGRIVPKDSHLGQMIGIVVDHELRYPSQLIEAFLEGVIVFLMVMWAKKHTKTHGLLIVVYGLGYSLMRFIAEFYREPDSQLGVYFLNLSMGQILSLFMVIVSLGILLYATKNSKKIKEN</sequence>
<reference key="1">
    <citation type="journal article" date="2006" name="PLoS Genet.">
        <title>Who ate whom? Adaptive Helicobacter genomic changes that accompanied a host jump from early humans to large felines.</title>
        <authorList>
            <person name="Eppinger M."/>
            <person name="Baar C."/>
            <person name="Linz B."/>
            <person name="Raddatz G."/>
            <person name="Lanz C."/>
            <person name="Keller H."/>
            <person name="Morelli G."/>
            <person name="Gressmann H."/>
            <person name="Achtman M."/>
            <person name="Schuster S.C."/>
        </authorList>
    </citation>
    <scope>NUCLEOTIDE SEQUENCE [LARGE SCALE GENOMIC DNA]</scope>
    <source>
        <strain>Sheeba</strain>
    </source>
</reference>
<evidence type="ECO:0000255" key="1">
    <source>
        <dbReference type="HAMAP-Rule" id="MF_01147"/>
    </source>
</evidence>
<protein>
    <recommendedName>
        <fullName evidence="1">Phosphatidylglycerol--prolipoprotein diacylglyceryl transferase</fullName>
        <ecNumber evidence="1">2.5.1.145</ecNumber>
    </recommendedName>
</protein>
<dbReference type="EC" id="2.5.1.145" evidence="1"/>
<dbReference type="EMBL" id="AM260522">
    <property type="protein sequence ID" value="CAJ99795.1"/>
    <property type="molecule type" value="Genomic_DNA"/>
</dbReference>
<dbReference type="RefSeq" id="WP_011577905.1">
    <property type="nucleotide sequence ID" value="NC_008229.1"/>
</dbReference>
<dbReference type="SMR" id="Q17X31"/>
<dbReference type="STRING" id="382638.Hac_1031"/>
<dbReference type="GeneID" id="31758404"/>
<dbReference type="KEGG" id="hac:Hac_1031"/>
<dbReference type="eggNOG" id="COG0682">
    <property type="taxonomic scope" value="Bacteria"/>
</dbReference>
<dbReference type="HOGENOM" id="CLU_013386_1_0_7"/>
<dbReference type="OrthoDB" id="871140at2"/>
<dbReference type="BioCyc" id="HACI382638:HAC_RS04420-MONOMER"/>
<dbReference type="UniPathway" id="UPA00664"/>
<dbReference type="Proteomes" id="UP000000775">
    <property type="component" value="Chromosome"/>
</dbReference>
<dbReference type="GO" id="GO:0005886">
    <property type="term" value="C:plasma membrane"/>
    <property type="evidence" value="ECO:0007669"/>
    <property type="project" value="UniProtKB-SubCell"/>
</dbReference>
<dbReference type="GO" id="GO:0008961">
    <property type="term" value="F:phosphatidylglycerol-prolipoprotein diacylglyceryl transferase activity"/>
    <property type="evidence" value="ECO:0007669"/>
    <property type="project" value="UniProtKB-UniRule"/>
</dbReference>
<dbReference type="GO" id="GO:0042158">
    <property type="term" value="P:lipoprotein biosynthetic process"/>
    <property type="evidence" value="ECO:0007669"/>
    <property type="project" value="UniProtKB-UniRule"/>
</dbReference>
<dbReference type="HAMAP" id="MF_01147">
    <property type="entry name" value="Lgt"/>
    <property type="match status" value="1"/>
</dbReference>
<dbReference type="InterPro" id="IPR001640">
    <property type="entry name" value="Lgt"/>
</dbReference>
<dbReference type="NCBIfam" id="TIGR00544">
    <property type="entry name" value="lgt"/>
    <property type="match status" value="1"/>
</dbReference>
<dbReference type="PANTHER" id="PTHR30589:SF0">
    <property type="entry name" value="PHOSPHATIDYLGLYCEROL--PROLIPOPROTEIN DIACYLGLYCERYL TRANSFERASE"/>
    <property type="match status" value="1"/>
</dbReference>
<dbReference type="PANTHER" id="PTHR30589">
    <property type="entry name" value="PROLIPOPROTEIN DIACYLGLYCERYL TRANSFERASE"/>
    <property type="match status" value="1"/>
</dbReference>
<dbReference type="Pfam" id="PF01790">
    <property type="entry name" value="LGT"/>
    <property type="match status" value="1"/>
</dbReference>
<dbReference type="PROSITE" id="PS01311">
    <property type="entry name" value="LGT"/>
    <property type="match status" value="1"/>
</dbReference>
<feature type="chain" id="PRO_1000053441" description="Phosphatidylglycerol--prolipoprotein diacylglyceryl transferase">
    <location>
        <begin position="1"/>
        <end position="283"/>
    </location>
</feature>
<feature type="transmembrane region" description="Helical" evidence="1">
    <location>
        <begin position="21"/>
        <end position="41"/>
    </location>
</feature>
<feature type="transmembrane region" description="Helical" evidence="1">
    <location>
        <begin position="62"/>
        <end position="82"/>
    </location>
</feature>
<feature type="transmembrane region" description="Helical" evidence="1">
    <location>
        <begin position="106"/>
        <end position="126"/>
    </location>
</feature>
<feature type="transmembrane region" description="Helical" evidence="1">
    <location>
        <begin position="136"/>
        <end position="156"/>
    </location>
</feature>
<feature type="transmembrane region" description="Helical" evidence="1">
    <location>
        <begin position="190"/>
        <end position="210"/>
    </location>
</feature>
<feature type="transmembrane region" description="Helical" evidence="1">
    <location>
        <begin position="218"/>
        <end position="238"/>
    </location>
</feature>
<feature type="transmembrane region" description="Helical" evidence="1">
    <location>
        <begin position="252"/>
        <end position="272"/>
    </location>
</feature>
<feature type="binding site" evidence="1">
    <location>
        <position position="155"/>
    </location>
    <ligand>
        <name>a 1,2-diacyl-sn-glycero-3-phospho-(1'-sn-glycerol)</name>
        <dbReference type="ChEBI" id="CHEBI:64716"/>
    </ligand>
</feature>
<accession>Q17X31</accession>
<proteinExistence type="inferred from homology"/>
<keyword id="KW-0997">Cell inner membrane</keyword>
<keyword id="KW-1003">Cell membrane</keyword>
<keyword id="KW-0472">Membrane</keyword>
<keyword id="KW-0808">Transferase</keyword>
<keyword id="KW-0812">Transmembrane</keyword>
<keyword id="KW-1133">Transmembrane helix</keyword>
<organism>
    <name type="scientific">Helicobacter acinonychis (strain Sheeba)</name>
    <dbReference type="NCBI Taxonomy" id="382638"/>
    <lineage>
        <taxon>Bacteria</taxon>
        <taxon>Pseudomonadati</taxon>
        <taxon>Campylobacterota</taxon>
        <taxon>Epsilonproteobacteria</taxon>
        <taxon>Campylobacterales</taxon>
        <taxon>Helicobacteraceae</taxon>
        <taxon>Helicobacter</taxon>
    </lineage>
</organism>
<gene>
    <name evidence="1" type="primary">lgt</name>
    <name type="ordered locus">Hac_1031</name>
</gene>